<name>VAL2_ARATH</name>
<keyword id="KW-0002">3D-structure</keyword>
<keyword id="KW-0025">Alternative splicing</keyword>
<keyword id="KW-0238">DNA-binding</keyword>
<keyword id="KW-0479">Metal-binding</keyword>
<keyword id="KW-0539">Nucleus</keyword>
<keyword id="KW-1185">Reference proteome</keyword>
<keyword id="KW-0678">Repressor</keyword>
<keyword id="KW-0804">Transcription</keyword>
<keyword id="KW-0805">Transcription regulation</keyword>
<keyword id="KW-0862">Zinc</keyword>
<keyword id="KW-0863">Zinc-finger</keyword>
<comment type="function">
    <text evidence="4 5">Transcriptional repressor of gene expression involved in embryonic pathways, such as LEC1, ABI3, and FUS3. Repressor of the sugar-inducible genes involved in the seed maturation program in seedlings. Plays an essential role in regulating the transition from seed maturation to seedling growth. Functionally redundant with VAL1/HSI2.</text>
</comment>
<comment type="interaction">
    <interactant intactId="EBI-15193683">
        <id>Q5CCK4</id>
    </interactant>
    <interactant intactId="EBI-1778843">
        <id>Q9S7Z2</id>
        <label>AFP4</label>
    </interactant>
    <organismsDiffer>false</organismsDiffer>
    <experiments>3</experiments>
</comment>
<comment type="interaction">
    <interactant intactId="EBI-15193683">
        <id>Q5CCK4</id>
    </interactant>
    <interactant intactId="EBI-2363348">
        <id>Q9FLI3</id>
        <label>AHG1</label>
    </interactant>
    <organismsDiffer>false</organismsDiffer>
    <experiments>5</experiments>
</comment>
<comment type="interaction">
    <interactant intactId="EBI-15193683">
        <id>Q5CCK4</id>
    </interactant>
    <interactant intactId="EBI-1100711">
        <id>Q9SAZ5</id>
        <label>AHP3</label>
    </interactant>
    <organismsDiffer>false</organismsDiffer>
    <experiments>3</experiments>
</comment>
<comment type="interaction">
    <interactant intactId="EBI-15193683">
        <id>Q5CCK4</id>
    </interactant>
    <interactant intactId="EBI-1573499">
        <id>Q9LNW3</id>
        <label>AIP1</label>
    </interactant>
    <organismsDiffer>false</organismsDiffer>
    <experiments>3</experiments>
</comment>
<comment type="interaction">
    <interactant intactId="EBI-15193683">
        <id>Q5CCK4</id>
    </interactant>
    <interactant intactId="EBI-2130714">
        <id>Q9STS3</id>
        <label>APC8</label>
    </interactant>
    <organismsDiffer>false</organismsDiffer>
    <experiments>3</experiments>
</comment>
<comment type="interaction">
    <interactant intactId="EBI-15193683">
        <id>Q5CCK4</id>
    </interactant>
    <interactant intactId="EBI-3946783">
        <id>Q9C5W9</id>
        <label>ARF18</label>
    </interactant>
    <organismsDiffer>false</organismsDiffer>
    <experiments>8</experiments>
</comment>
<comment type="interaction">
    <interactant intactId="EBI-15193683">
        <id>Q5CCK4</id>
    </interactant>
    <interactant intactId="EBI-25517779">
        <id>Q29PY0</id>
        <label>At1g01225</label>
    </interactant>
    <organismsDiffer>false</organismsDiffer>
    <experiments>3</experiments>
</comment>
<comment type="interaction">
    <interactant intactId="EBI-15193683">
        <id>Q5CCK4</id>
    </interactant>
    <interactant intactId="EBI-25518084">
        <id>Q8GZ67</id>
        <label>At1g68160/T22E19_21</label>
    </interactant>
    <organismsDiffer>false</organismsDiffer>
    <experiments>3</experiments>
</comment>
<comment type="interaction">
    <interactant intactId="EBI-15193683">
        <id>Q5CCK4</id>
    </interactant>
    <interactant intactId="EBI-25517938">
        <id>Q9SAG6</id>
        <label>At1g80940</label>
    </interactant>
    <organismsDiffer>false</organismsDiffer>
    <experiments>3</experiments>
</comment>
<comment type="interaction">
    <interactant intactId="EBI-15193683">
        <id>Q5CCK4</id>
    </interactant>
    <interactant intactId="EBI-25517954">
        <id>Q9LS47</id>
        <label>At3g18430</label>
    </interactant>
    <organismsDiffer>false</organismsDiffer>
    <experiments>3</experiments>
</comment>
<comment type="interaction">
    <interactant intactId="EBI-15193683">
        <id>Q5CCK4</id>
    </interactant>
    <interactant intactId="EBI-25517043">
        <id>A0A384KYS8</id>
        <label>At3g48510</label>
    </interactant>
    <organismsDiffer>false</organismsDiffer>
    <experiments>3</experiments>
</comment>
<comment type="interaction">
    <interactant intactId="EBI-15193683">
        <id>Q5CCK4</id>
    </interactant>
    <interactant intactId="EBI-25517258">
        <id>A0A384L7B9</id>
        <label>At3g62550</label>
    </interactant>
    <organismsDiffer>false</organismsDiffer>
    <experiments>3</experiments>
</comment>
<comment type="interaction">
    <interactant intactId="EBI-15193683">
        <id>Q5CCK4</id>
    </interactant>
    <interactant intactId="EBI-25517233">
        <id>F4JJA3</id>
        <label>At4g09060</label>
    </interactant>
    <organismsDiffer>false</organismsDiffer>
    <experiments>3</experiments>
</comment>
<comment type="interaction">
    <interactant intactId="EBI-15193683">
        <id>Q5CCK4</id>
    </interactant>
    <interactant intactId="EBI-25517978">
        <id>A0A178UVG5</id>
        <label>At4g36030</label>
    </interactant>
    <organismsDiffer>false</organismsDiffer>
    <experiments>3</experiments>
</comment>
<comment type="interaction">
    <interactant intactId="EBI-15193683">
        <id>Q5CCK4</id>
    </interactant>
    <interactant intactId="EBI-25517622">
        <id>Q6NNP0</id>
        <label>ATG16</label>
    </interactant>
    <organismsDiffer>false</organismsDiffer>
    <experiments>3</experiments>
</comment>
<comment type="interaction">
    <interactant intactId="EBI-15193683">
        <id>Q5CCK4</id>
    </interactant>
    <interactant intactId="EBI-25517714">
        <id>A0A178V4E1</id>
        <label>AXX17_At4g38800</label>
    </interactant>
    <organismsDiffer>false</organismsDiffer>
    <experiments>3</experiments>
</comment>
<comment type="interaction">
    <interactant intactId="EBI-15193683">
        <id>Q5CCK4</id>
    </interactant>
    <interactant intactId="EBI-25517652">
        <id>A0A178UNB2</id>
        <label>AXX17_At5g54780</label>
    </interactant>
    <organismsDiffer>false</organismsDiffer>
    <experiments>3</experiments>
</comment>
<comment type="interaction">
    <interactant intactId="EBI-15193683">
        <id>Q5CCK4</id>
    </interactant>
    <interactant intactId="EBI-1148379">
        <id>Q9SJ56</id>
        <label>BLH1</label>
    </interactant>
    <organismsDiffer>false</organismsDiffer>
    <experiments>3</experiments>
</comment>
<comment type="interaction">
    <interactant intactId="EBI-15193683">
        <id>Q5CCK4</id>
    </interactant>
    <interactant intactId="EBI-531074">
        <id>Q8L5U0</id>
        <label>CSN4</label>
    </interactant>
    <organismsDiffer>false</organismsDiffer>
    <experiments>3</experiments>
</comment>
<comment type="interaction">
    <interactant intactId="EBI-15193683">
        <id>Q5CCK4</id>
    </interactant>
    <interactant intactId="EBI-25518099">
        <id>Q9C968</id>
        <label>CYCA2-4</label>
    </interactant>
    <organismsDiffer>false</organismsDiffer>
    <experiments>3</experiments>
</comment>
<comment type="interaction">
    <interactant intactId="EBI-15193683">
        <id>Q5CCK4</id>
    </interactant>
    <interactant intactId="EBI-1787347">
        <id>Q94AY3</id>
        <label>DRIP2</label>
    </interactant>
    <organismsDiffer>false</organismsDiffer>
    <experiments>3</experiments>
</comment>
<comment type="interaction">
    <interactant intactId="EBI-15193683">
        <id>Q5CCK4</id>
    </interactant>
    <interactant intactId="EBI-401198">
        <id>Q9SKK0</id>
        <label>EBF1</label>
    </interactant>
    <organismsDiffer>false</organismsDiffer>
    <experiments>3</experiments>
</comment>
<comment type="interaction">
    <interactant intactId="EBI-15193683">
        <id>Q5CCK4</id>
    </interactant>
    <interactant intactId="EBI-2000137">
        <id>Q9MAI5</id>
        <label>ERF8</label>
    </interactant>
    <organismsDiffer>false</organismsDiffer>
    <experiments>3</experiments>
</comment>
<comment type="interaction">
    <interactant intactId="EBI-15193683">
        <id>Q5CCK4</id>
    </interactant>
    <interactant intactId="EBI-25516131">
        <id>Q9FN91</id>
        <label>EXO70H7</label>
    </interactant>
    <organismsDiffer>false</organismsDiffer>
    <experiments>3</experiments>
</comment>
<comment type="interaction">
    <interactant intactId="EBI-15193683">
        <id>Q5CCK4</id>
    </interactant>
    <interactant intactId="EBI-449431">
        <id>P16972</id>
        <label>FD2</label>
    </interactant>
    <organismsDiffer>false</organismsDiffer>
    <experiments>3</experiments>
</comment>
<comment type="interaction">
    <interactant intactId="EBI-15193683">
        <id>Q5CCK4</id>
    </interactant>
    <interactant intactId="EBI-4476833">
        <id>O23624</id>
        <label>FPF1</label>
    </interactant>
    <organismsDiffer>false</organismsDiffer>
    <experiments>3</experiments>
</comment>
<comment type="interaction">
    <interactant intactId="EBI-15193683">
        <id>Q5CCK4</id>
    </interactant>
    <interactant intactId="EBI-4458381">
        <id>O49653</id>
        <label>GCP2</label>
    </interactant>
    <organismsDiffer>false</organismsDiffer>
    <experiments>3</experiments>
</comment>
<comment type="interaction">
    <interactant intactId="EBI-15193683">
        <id>Q5CCK4</id>
    </interactant>
    <interactant intactId="EBI-530486">
        <id>P46639</id>
        <label>KNAT1</label>
    </interactant>
    <organismsDiffer>false</organismsDiffer>
    <experiments>3</experiments>
</comment>
<comment type="interaction">
    <interactant intactId="EBI-15193683">
        <id>Q5CCK4</id>
    </interactant>
    <interactant intactId="EBI-4424076">
        <id>Q9FIR9</id>
        <label>LSU2</label>
    </interactant>
    <organismsDiffer>false</organismsDiffer>
    <experiments>3</experiments>
</comment>
<comment type="interaction">
    <interactant intactId="EBI-15193683">
        <id>Q5CCK4</id>
    </interactant>
    <interactant intactId="EBI-25517302">
        <id>Q9M0V0</id>
        <label>MFDX1</label>
    </interactant>
    <organismsDiffer>false</organismsDiffer>
    <experiments>3</experiments>
</comment>
<comment type="interaction">
    <interactant intactId="EBI-15193683">
        <id>Q5CCK4</id>
    </interactant>
    <interactant intactId="EBI-25518065">
        <id>Q9FMI5</id>
        <label>MHJ24.13</label>
    </interactant>
    <organismsDiffer>false</organismsDiffer>
    <experiments>3</experiments>
</comment>
<comment type="interaction">
    <interactant intactId="EBI-15193683">
        <id>Q5CCK4</id>
    </interactant>
    <interactant intactId="EBI-15211238">
        <id>Q9FFJ9</id>
        <label>MJJ3.20</label>
    </interactant>
    <organismsDiffer>false</organismsDiffer>
    <experiments>3</experiments>
</comment>
<comment type="interaction">
    <interactant intactId="EBI-15193683">
        <id>Q5CCK4</id>
    </interactant>
    <interactant intactId="EBI-2128593">
        <id>Q9LPQ3</id>
        <label>MKK7</label>
    </interactant>
    <organismsDiffer>false</organismsDiffer>
    <experiments>5</experiments>
</comment>
<comment type="interaction">
    <interactant intactId="EBI-15193683">
        <id>Q5CCK4</id>
    </interactant>
    <interactant intactId="EBI-25517907">
        <id>Q9FJ98</id>
        <label>NRPB6A</label>
    </interactant>
    <organismsDiffer>false</organismsDiffer>
    <experiments>3</experiments>
</comment>
<comment type="interaction">
    <interactant intactId="EBI-15193683">
        <id>Q5CCK4</id>
    </interactant>
    <interactant intactId="EBI-4427818">
        <id>O22229</id>
        <label>NTRC</label>
    </interactant>
    <organismsDiffer>false</organismsDiffer>
    <experiments>3</experiments>
</comment>
<comment type="interaction">
    <interactant intactId="EBI-15193683">
        <id>Q5CCK4</id>
    </interactant>
    <interactant intactId="EBI-9536794">
        <id>Q9XF57</id>
        <label>PEX7</label>
    </interactant>
    <organismsDiffer>false</organismsDiffer>
    <experiments>3</experiments>
</comment>
<comment type="interaction">
    <interactant intactId="EBI-15193683">
        <id>Q5CCK4</id>
    </interactant>
    <interactant intactId="EBI-1998055">
        <id>Q1H5E9</id>
        <label>PRDA1</label>
    </interactant>
    <organismsDiffer>false</organismsDiffer>
    <experiments>3</experiments>
</comment>
<comment type="interaction">
    <interactant intactId="EBI-15193683">
        <id>Q5CCK4</id>
    </interactant>
    <interactant intactId="EBI-7890412">
        <id>Q9XI19</id>
        <label>PTAC6</label>
    </interactant>
    <organismsDiffer>false</organismsDiffer>
    <experiments>3</experiments>
</comment>
<comment type="interaction">
    <interactant intactId="EBI-15193683">
        <id>Q5CCK4</id>
    </interactant>
    <interactant intactId="EBI-20557876">
        <id>Q84L33</id>
        <label>RAD23B</label>
    </interactant>
    <organismsDiffer>false</organismsDiffer>
    <experiments>3</experiments>
</comment>
<comment type="interaction">
    <interactant intactId="EBI-15193683">
        <id>Q5CCK4</id>
    </interactant>
    <interactant intactId="EBI-4470690">
        <id>Q93ZX1</id>
        <label>RFC4</label>
    </interactant>
    <organismsDiffer>false</organismsDiffer>
    <experiments>3</experiments>
</comment>
<comment type="interaction">
    <interactant intactId="EBI-15193683">
        <id>Q5CCK4</id>
    </interactant>
    <interactant intactId="EBI-15681313">
        <id>Q9LF53</id>
        <label>RGL3</label>
    </interactant>
    <organismsDiffer>false</organismsDiffer>
    <experiments>3</experiments>
</comment>
<comment type="interaction">
    <interactant intactId="EBI-15193683">
        <id>Q5CCK4</id>
    </interactant>
    <interactant intactId="EBI-25518040">
        <id>A8MRK9</id>
        <label>RPC14</label>
    </interactant>
    <organismsDiffer>false</organismsDiffer>
    <experiments>3</experiments>
</comment>
<comment type="interaction">
    <interactant intactId="EBI-15193683">
        <id>Q5CCK4</id>
    </interactant>
    <interactant intactId="EBI-1238460">
        <id>Q9FHZ1</id>
        <label>SCL23</label>
    </interactant>
    <organismsDiffer>false</organismsDiffer>
    <experiments>5</experiments>
</comment>
<comment type="interaction">
    <interactant intactId="EBI-15193683">
        <id>Q5CCK4</id>
    </interactant>
    <interactant intactId="EBI-25512645">
        <id>Q9FLP5</id>
        <label>SUMO3</label>
    </interactant>
    <organismsDiffer>false</organismsDiffer>
    <experiments>3</experiments>
</comment>
<comment type="interaction">
    <interactant intactId="EBI-15193683">
        <id>Q5CCK4</id>
    </interactant>
    <interactant intactId="EBI-25518134">
        <id>A0ME58</id>
    </interactant>
    <organismsDiffer>false</organismsDiffer>
    <experiments>3</experiments>
</comment>
<comment type="subcellular location">
    <subcellularLocation>
        <location evidence="7">Nucleus</location>
    </subcellularLocation>
</comment>
<comment type="alternative products">
    <event type="alternative splicing"/>
    <isoform>
        <id>Q5CCK4-1</id>
        <name>1</name>
        <sequence type="displayed"/>
    </isoform>
    <isoform>
        <id>Q5CCK4-2</id>
        <name>2</name>
        <sequence type="described" ref="VSP_037329"/>
    </isoform>
</comment>
<comment type="miscellaneous">
    <molecule>Isoform 2</molecule>
    <text evidence="7">May be due to a competing donor splice site.</text>
</comment>
<comment type="sequence caution" evidence="7">
    <conflict type="erroneous gene model prediction">
        <sequence resource="EMBL-CDS" id="CAA16588"/>
    </conflict>
</comment>
<comment type="sequence caution" evidence="7">
    <conflict type="erroneous gene model prediction">
        <sequence resource="EMBL-CDS" id="CAB79919"/>
    </conflict>
</comment>
<sequence>MESIKVCMNALCGAASTSGEWKKGWPMRSGDLASLCDKCGCAYEQSIFCEVFHAKESGWRECNSCDKRLHCGCIASRFMMELLENGGVTCISCAKKSGLISMNVSHESNGKDFPSFASAEHVGSVLERTNLKHLLHFQRIDPTHSSLQMKQEESLLPSSLDALRHKTERKELSAQPNLSISLGPTLMTSPFHDAAVDDRSKTNSIFQLAPRSRQLLPKPANSAPIAAGMEPSGSLVSQIHVARPPPEGRGKTQLLPRYWPRITDQELLQLSGQYPHLSNSKIIPLFEKVLSASDAGRIGRLVLPKACAEAYFPPISLPEGLPLKIQDIKGKEWVFQFRFWPNNNSRMYVLEGVTPCIQSMQLQAGDTVTFSRTEPEGKLVMGYRKATNSTATQMFKGSSEPNLNMFSNSLNPGCGDINWSKLEKSEDMAKDNLFLQSSLTSARKRVRNIGTKSKRLLIDSVDVLELKITWEEAQELLRPPQSTKPSIFTLENQDFEEYDEPPVFGKRTLFVSRQTGEQEQWVQCDACGKWRQLPVDILLPPKWSCSDNLLDPGRSSCSAPDELSPREQDTLVRQSKEFKRRRLASSNEKLNQSQDASALNSLGNAGITTTGEQGEITVAATTKHPRHRAGCSCIVCSQPPSGKGKHKPSCTCTVCEAVKRRFRTLMLRKRNKGEAGQASQQAQSQSECRDETEVESIPAVELAAGENIDLNSDPGASRVSMMRLLQAAAFPLEAYLKQKAISNTAGEQQSSDMVSTEHGSSSAAQETEKDTTNGAHDPVN</sequence>
<feature type="chain" id="PRO_0000375118" description="B3 domain-containing transcription repressor VAL2">
    <location>
        <begin position="1"/>
        <end position="780"/>
    </location>
</feature>
<feature type="DNA-binding region" description="TF-B3" evidence="1">
    <location>
        <begin position="286"/>
        <end position="387"/>
    </location>
</feature>
<feature type="zinc finger region" description="CW-type" evidence="2">
    <location>
        <begin position="515"/>
        <end position="565"/>
    </location>
</feature>
<feature type="region of interest" description="Disordered" evidence="3">
    <location>
        <begin position="577"/>
        <end position="608"/>
    </location>
</feature>
<feature type="region of interest" description="Disordered" evidence="3">
    <location>
        <begin position="669"/>
        <end position="695"/>
    </location>
</feature>
<feature type="region of interest" description="Disordered" evidence="3">
    <location>
        <begin position="743"/>
        <end position="780"/>
    </location>
</feature>
<feature type="compositionally biased region" description="Polar residues" evidence="3">
    <location>
        <begin position="584"/>
        <end position="603"/>
    </location>
</feature>
<feature type="compositionally biased region" description="Low complexity" evidence="3">
    <location>
        <begin position="674"/>
        <end position="686"/>
    </location>
</feature>
<feature type="compositionally biased region" description="Polar residues" evidence="3">
    <location>
        <begin position="743"/>
        <end position="765"/>
    </location>
</feature>
<feature type="binding site" evidence="2">
    <location>
        <position position="524"/>
    </location>
    <ligand>
        <name>Zn(2+)</name>
        <dbReference type="ChEBI" id="CHEBI:29105"/>
    </ligand>
</feature>
<feature type="binding site" evidence="2">
    <location>
        <position position="527"/>
    </location>
    <ligand>
        <name>Zn(2+)</name>
        <dbReference type="ChEBI" id="CHEBI:29105"/>
    </ligand>
</feature>
<feature type="binding site" evidence="2">
    <location>
        <position position="545"/>
    </location>
    <ligand>
        <name>Zn(2+)</name>
        <dbReference type="ChEBI" id="CHEBI:29105"/>
    </ligand>
</feature>
<feature type="binding site" evidence="2">
    <location>
        <position position="557"/>
    </location>
    <ligand>
        <name>Zn(2+)</name>
        <dbReference type="ChEBI" id="CHEBI:29105"/>
    </ligand>
</feature>
<feature type="splice variant" id="VSP_037329" description="In isoform 2." evidence="6">
    <original>QYPHL</original>
    <variation>H</variation>
    <location>
        <begin position="273"/>
        <end position="277"/>
    </location>
</feature>
<feature type="turn" evidence="8">
    <location>
        <begin position="10"/>
        <end position="12"/>
    </location>
</feature>
<feature type="strand" evidence="8">
    <location>
        <begin position="18"/>
        <end position="20"/>
    </location>
</feature>
<feature type="strand" evidence="8">
    <location>
        <begin position="22"/>
        <end position="26"/>
    </location>
</feature>
<feature type="strand" evidence="8">
    <location>
        <begin position="32"/>
        <end position="35"/>
    </location>
</feature>
<feature type="helix" evidence="8">
    <location>
        <begin position="37"/>
        <end position="44"/>
    </location>
</feature>
<feature type="helix" evidence="8">
    <location>
        <begin position="48"/>
        <end position="52"/>
    </location>
</feature>
<feature type="strand" evidence="8">
    <location>
        <begin position="59"/>
        <end position="66"/>
    </location>
</feature>
<feature type="strand" evidence="8">
    <location>
        <begin position="68"/>
        <end position="70"/>
    </location>
</feature>
<feature type="helix" evidence="8">
    <location>
        <begin position="74"/>
        <end position="79"/>
    </location>
</feature>
<feature type="strand" evidence="8">
    <location>
        <begin position="80"/>
        <end position="82"/>
    </location>
</feature>
<feature type="strand" evidence="8">
    <location>
        <begin position="86"/>
        <end position="90"/>
    </location>
</feature>
<feature type="helix" evidence="8">
    <location>
        <begin position="91"/>
        <end position="97"/>
    </location>
</feature>
<gene>
    <name type="primary">VAL2</name>
    <name type="synonym">HSL1</name>
    <name type="ordered locus">At4g32010</name>
    <name type="ORF">F10N7.180</name>
</gene>
<organism>
    <name type="scientific">Arabidopsis thaliana</name>
    <name type="common">Mouse-ear cress</name>
    <dbReference type="NCBI Taxonomy" id="3702"/>
    <lineage>
        <taxon>Eukaryota</taxon>
        <taxon>Viridiplantae</taxon>
        <taxon>Streptophyta</taxon>
        <taxon>Embryophyta</taxon>
        <taxon>Tracheophyta</taxon>
        <taxon>Spermatophyta</taxon>
        <taxon>Magnoliopsida</taxon>
        <taxon>eudicotyledons</taxon>
        <taxon>Gunneridae</taxon>
        <taxon>Pentapetalae</taxon>
        <taxon>rosids</taxon>
        <taxon>malvids</taxon>
        <taxon>Brassicales</taxon>
        <taxon>Brassicaceae</taxon>
        <taxon>Camelineae</taxon>
        <taxon>Arabidopsis</taxon>
    </lineage>
</organism>
<protein>
    <recommendedName>
        <fullName>B3 domain-containing transcription repressor VAL2</fullName>
    </recommendedName>
    <alternativeName>
        <fullName>Protein HIGH-LEVEL EXPRESSION OF SUGAR-INDUCIBLE-LIKE 1</fullName>
    </alternativeName>
    <alternativeName>
        <fullName>Protein VP1/ABI3-LIKE 2</fullName>
    </alternativeName>
</protein>
<dbReference type="EMBL" id="AB206554">
    <property type="protein sequence ID" value="BAD90971.1"/>
    <property type="molecule type" value="mRNA"/>
</dbReference>
<dbReference type="EMBL" id="AL021636">
    <property type="protein sequence ID" value="CAA16588.1"/>
    <property type="status" value="ALT_SEQ"/>
    <property type="molecule type" value="Genomic_DNA"/>
</dbReference>
<dbReference type="EMBL" id="AL161580">
    <property type="protein sequence ID" value="CAB79919.1"/>
    <property type="status" value="ALT_SEQ"/>
    <property type="molecule type" value="Genomic_DNA"/>
</dbReference>
<dbReference type="EMBL" id="CP002687">
    <property type="protein sequence ID" value="AEE85993.1"/>
    <property type="molecule type" value="Genomic_DNA"/>
</dbReference>
<dbReference type="EMBL" id="CP002687">
    <property type="protein sequence ID" value="ANM67961.1"/>
    <property type="molecule type" value="Genomic_DNA"/>
</dbReference>
<dbReference type="EMBL" id="AK228013">
    <property type="protein sequence ID" value="BAE99977.1"/>
    <property type="molecule type" value="mRNA"/>
</dbReference>
<dbReference type="PIR" id="T04644">
    <property type="entry name" value="T04644"/>
</dbReference>
<dbReference type="RefSeq" id="NP_001329752.1">
    <molecule id="Q5CCK4-2"/>
    <property type="nucleotide sequence ID" value="NM_001342124.1"/>
</dbReference>
<dbReference type="RefSeq" id="NP_194929.2">
    <molecule id="Q5CCK4-1"/>
    <property type="nucleotide sequence ID" value="NM_119353.4"/>
</dbReference>
<dbReference type="PDB" id="5Z28">
    <property type="method" value="X-ray"/>
    <property type="resolution" value="2.25 A"/>
    <property type="chains" value="A/B=4-105"/>
</dbReference>
<dbReference type="PDBsum" id="5Z28"/>
<dbReference type="SMR" id="Q5CCK4"/>
<dbReference type="BioGRID" id="14618">
    <property type="interactions" value="55"/>
</dbReference>
<dbReference type="FunCoup" id="Q5CCK4">
    <property type="interactions" value="1861"/>
</dbReference>
<dbReference type="IntAct" id="Q5CCK4">
    <property type="interactions" value="58"/>
</dbReference>
<dbReference type="STRING" id="3702.Q5CCK4"/>
<dbReference type="PaxDb" id="3702-AT4G32010.1"/>
<dbReference type="ProteomicsDB" id="242309">
    <molecule id="Q5CCK4-1"/>
</dbReference>
<dbReference type="EnsemblPlants" id="AT4G32010.1">
    <molecule id="Q5CCK4-1"/>
    <property type="protein sequence ID" value="AT4G32010.1"/>
    <property type="gene ID" value="AT4G32010"/>
</dbReference>
<dbReference type="EnsemblPlants" id="AT4G32010.2">
    <molecule id="Q5CCK4-2"/>
    <property type="protein sequence ID" value="AT4G32010.2"/>
    <property type="gene ID" value="AT4G32010"/>
</dbReference>
<dbReference type="GeneID" id="829332"/>
<dbReference type="Gramene" id="AT4G32010.1">
    <molecule id="Q5CCK4-1"/>
    <property type="protein sequence ID" value="AT4G32010.1"/>
    <property type="gene ID" value="AT4G32010"/>
</dbReference>
<dbReference type="Gramene" id="AT4G32010.2">
    <molecule id="Q5CCK4-2"/>
    <property type="protein sequence ID" value="AT4G32010.2"/>
    <property type="gene ID" value="AT4G32010"/>
</dbReference>
<dbReference type="KEGG" id="ath:AT4G32010"/>
<dbReference type="Araport" id="AT4G32010"/>
<dbReference type="TAIR" id="AT4G32010">
    <property type="gene designation" value="HSL1"/>
</dbReference>
<dbReference type="eggNOG" id="ENOG502S8EJ">
    <property type="taxonomic scope" value="Eukaryota"/>
</dbReference>
<dbReference type="HOGENOM" id="CLU_015907_0_0_1"/>
<dbReference type="InParanoid" id="Q5CCK4"/>
<dbReference type="OMA" id="PLETYMK"/>
<dbReference type="PhylomeDB" id="Q5CCK4"/>
<dbReference type="PRO" id="PR:Q5CCK4"/>
<dbReference type="Proteomes" id="UP000006548">
    <property type="component" value="Chromosome 4"/>
</dbReference>
<dbReference type="ExpressionAtlas" id="Q5CCK4">
    <property type="expression patterns" value="baseline and differential"/>
</dbReference>
<dbReference type="GO" id="GO:0005634">
    <property type="term" value="C:nucleus"/>
    <property type="evidence" value="ECO:0007669"/>
    <property type="project" value="UniProtKB-SubCell"/>
</dbReference>
<dbReference type="GO" id="GO:0003700">
    <property type="term" value="F:DNA-binding transcription factor activity"/>
    <property type="evidence" value="ECO:0000250"/>
    <property type="project" value="TAIR"/>
</dbReference>
<dbReference type="GO" id="GO:0000976">
    <property type="term" value="F:transcription cis-regulatory region binding"/>
    <property type="evidence" value="ECO:0000353"/>
    <property type="project" value="TAIR"/>
</dbReference>
<dbReference type="GO" id="GO:0008270">
    <property type="term" value="F:zinc ion binding"/>
    <property type="evidence" value="ECO:0007669"/>
    <property type="project" value="UniProtKB-KW"/>
</dbReference>
<dbReference type="GO" id="GO:0006355">
    <property type="term" value="P:regulation of DNA-templated transcription"/>
    <property type="evidence" value="ECO:0000304"/>
    <property type="project" value="TAIR"/>
</dbReference>
<dbReference type="CDD" id="cd10017">
    <property type="entry name" value="B3_DNA"/>
    <property type="match status" value="1"/>
</dbReference>
<dbReference type="FunFam" id="2.40.330.10:FF:000006">
    <property type="entry name" value="B3 domain-containing transcription repressor VAL1"/>
    <property type="match status" value="1"/>
</dbReference>
<dbReference type="FunFam" id="3.30.40.100:FF:000007">
    <property type="entry name" value="B3 domain-containing transcription repressor VAL2"/>
    <property type="match status" value="1"/>
</dbReference>
<dbReference type="Gene3D" id="3.30.40.100">
    <property type="match status" value="1"/>
</dbReference>
<dbReference type="Gene3D" id="2.40.330.10">
    <property type="entry name" value="DNA-binding pseudobarrel domain"/>
    <property type="match status" value="1"/>
</dbReference>
<dbReference type="InterPro" id="IPR003340">
    <property type="entry name" value="B3_DNA-bd"/>
</dbReference>
<dbReference type="InterPro" id="IPR015300">
    <property type="entry name" value="DNA-bd_pseudobarrel_sf"/>
</dbReference>
<dbReference type="InterPro" id="IPR011124">
    <property type="entry name" value="Znf_CW"/>
</dbReference>
<dbReference type="PANTHER" id="PTHR46245">
    <property type="entry name" value="B3 DOMAIN-CONTAINING PROTEIN OS07G0563300"/>
    <property type="match status" value="1"/>
</dbReference>
<dbReference type="PANTHER" id="PTHR46245:SF2">
    <property type="entry name" value="B3 DOMAIN-CONTAINING TRANSCRIPTION REPRESSOR VAL2"/>
    <property type="match status" value="1"/>
</dbReference>
<dbReference type="Pfam" id="PF02362">
    <property type="entry name" value="B3"/>
    <property type="match status" value="1"/>
</dbReference>
<dbReference type="Pfam" id="PF07496">
    <property type="entry name" value="zf-CW"/>
    <property type="match status" value="1"/>
</dbReference>
<dbReference type="SMART" id="SM01019">
    <property type="entry name" value="B3"/>
    <property type="match status" value="1"/>
</dbReference>
<dbReference type="SUPFAM" id="SSF101936">
    <property type="entry name" value="DNA-binding pseudobarrel domain"/>
    <property type="match status" value="1"/>
</dbReference>
<dbReference type="PROSITE" id="PS50863">
    <property type="entry name" value="B3"/>
    <property type="match status" value="1"/>
</dbReference>
<dbReference type="PROSITE" id="PS51050">
    <property type="entry name" value="ZF_CW"/>
    <property type="match status" value="1"/>
</dbReference>
<evidence type="ECO:0000255" key="1">
    <source>
        <dbReference type="PROSITE-ProRule" id="PRU00326"/>
    </source>
</evidence>
<evidence type="ECO:0000255" key="2">
    <source>
        <dbReference type="PROSITE-ProRule" id="PRU00454"/>
    </source>
</evidence>
<evidence type="ECO:0000256" key="3">
    <source>
        <dbReference type="SAM" id="MobiDB-lite"/>
    </source>
</evidence>
<evidence type="ECO:0000269" key="4">
    <source>
    </source>
</evidence>
<evidence type="ECO:0000269" key="5">
    <source>
    </source>
</evidence>
<evidence type="ECO:0000303" key="6">
    <source ref="4"/>
</evidence>
<evidence type="ECO:0000305" key="7"/>
<evidence type="ECO:0007829" key="8">
    <source>
        <dbReference type="PDB" id="5Z28"/>
    </source>
</evidence>
<accession>Q5CCK4</accession>
<accession>O49390</accession>
<accession>Q0WSC1</accession>
<proteinExistence type="evidence at protein level"/>
<reference key="1">
    <citation type="journal article" date="2005" name="Plant Physiol.">
        <title>Analysis of a sugar response mutant of Arabidopsis identified a novel B3 domain protein that functions as an active transcriptional repressor.</title>
        <authorList>
            <person name="Tsukagoshi H."/>
            <person name="Saijo T."/>
            <person name="Shibata D."/>
            <person name="Morikami A."/>
            <person name="Nakamura K."/>
        </authorList>
    </citation>
    <scope>NUCLEOTIDE SEQUENCE [MRNA] (ISOFORM 1)</scope>
    <source>
        <strain>cv. Columbia</strain>
    </source>
</reference>
<reference key="2">
    <citation type="journal article" date="1999" name="Nature">
        <title>Sequence and analysis of chromosome 4 of the plant Arabidopsis thaliana.</title>
        <authorList>
            <person name="Mayer K.F.X."/>
            <person name="Schueller C."/>
            <person name="Wambutt R."/>
            <person name="Murphy G."/>
            <person name="Volckaert G."/>
            <person name="Pohl T."/>
            <person name="Duesterhoeft A."/>
            <person name="Stiekema W."/>
            <person name="Entian K.-D."/>
            <person name="Terryn N."/>
            <person name="Harris B."/>
            <person name="Ansorge W."/>
            <person name="Brandt P."/>
            <person name="Grivell L.A."/>
            <person name="Rieger M."/>
            <person name="Weichselgartner M."/>
            <person name="de Simone V."/>
            <person name="Obermaier B."/>
            <person name="Mache R."/>
            <person name="Mueller M."/>
            <person name="Kreis M."/>
            <person name="Delseny M."/>
            <person name="Puigdomenech P."/>
            <person name="Watson M."/>
            <person name="Schmidtheini T."/>
            <person name="Reichert B."/>
            <person name="Portetelle D."/>
            <person name="Perez-Alonso M."/>
            <person name="Boutry M."/>
            <person name="Bancroft I."/>
            <person name="Vos P."/>
            <person name="Hoheisel J."/>
            <person name="Zimmermann W."/>
            <person name="Wedler H."/>
            <person name="Ridley P."/>
            <person name="Langham S.-A."/>
            <person name="McCullagh B."/>
            <person name="Bilham L."/>
            <person name="Robben J."/>
            <person name="van der Schueren J."/>
            <person name="Grymonprez B."/>
            <person name="Chuang Y.-J."/>
            <person name="Vandenbussche F."/>
            <person name="Braeken M."/>
            <person name="Weltjens I."/>
            <person name="Voet M."/>
            <person name="Bastiaens I."/>
            <person name="Aert R."/>
            <person name="Defoor E."/>
            <person name="Weitzenegger T."/>
            <person name="Bothe G."/>
            <person name="Ramsperger U."/>
            <person name="Hilbert H."/>
            <person name="Braun M."/>
            <person name="Holzer E."/>
            <person name="Brandt A."/>
            <person name="Peters S."/>
            <person name="van Staveren M."/>
            <person name="Dirkse W."/>
            <person name="Mooijman P."/>
            <person name="Klein Lankhorst R."/>
            <person name="Rose M."/>
            <person name="Hauf J."/>
            <person name="Koetter P."/>
            <person name="Berneiser S."/>
            <person name="Hempel S."/>
            <person name="Feldpausch M."/>
            <person name="Lamberth S."/>
            <person name="Van den Daele H."/>
            <person name="De Keyser A."/>
            <person name="Buysshaert C."/>
            <person name="Gielen J."/>
            <person name="Villarroel R."/>
            <person name="De Clercq R."/>
            <person name="van Montagu M."/>
            <person name="Rogers J."/>
            <person name="Cronin A."/>
            <person name="Quail M.A."/>
            <person name="Bray-Allen S."/>
            <person name="Clark L."/>
            <person name="Doggett J."/>
            <person name="Hall S."/>
            <person name="Kay M."/>
            <person name="Lennard N."/>
            <person name="McLay K."/>
            <person name="Mayes R."/>
            <person name="Pettett A."/>
            <person name="Rajandream M.A."/>
            <person name="Lyne M."/>
            <person name="Benes V."/>
            <person name="Rechmann S."/>
            <person name="Borkova D."/>
            <person name="Bloecker H."/>
            <person name="Scharfe M."/>
            <person name="Grimm M."/>
            <person name="Loehnert T.-H."/>
            <person name="Dose S."/>
            <person name="de Haan M."/>
            <person name="Maarse A.C."/>
            <person name="Schaefer M."/>
            <person name="Mueller-Auer S."/>
            <person name="Gabel C."/>
            <person name="Fuchs M."/>
            <person name="Fartmann B."/>
            <person name="Granderath K."/>
            <person name="Dauner D."/>
            <person name="Herzl A."/>
            <person name="Neumann S."/>
            <person name="Argiriou A."/>
            <person name="Vitale D."/>
            <person name="Liguori R."/>
            <person name="Piravandi E."/>
            <person name="Massenet O."/>
            <person name="Quigley F."/>
            <person name="Clabauld G."/>
            <person name="Muendlein A."/>
            <person name="Felber R."/>
            <person name="Schnabl S."/>
            <person name="Hiller R."/>
            <person name="Schmidt W."/>
            <person name="Lecharny A."/>
            <person name="Aubourg S."/>
            <person name="Chefdor F."/>
            <person name="Cooke R."/>
            <person name="Berger C."/>
            <person name="Monfort A."/>
            <person name="Casacuberta E."/>
            <person name="Gibbons T."/>
            <person name="Weber N."/>
            <person name="Vandenbol M."/>
            <person name="Bargues M."/>
            <person name="Terol J."/>
            <person name="Torres A."/>
            <person name="Perez-Perez A."/>
            <person name="Purnelle B."/>
            <person name="Bent E."/>
            <person name="Johnson S."/>
            <person name="Tacon D."/>
            <person name="Jesse T."/>
            <person name="Heijnen L."/>
            <person name="Schwarz S."/>
            <person name="Scholler P."/>
            <person name="Heber S."/>
            <person name="Francs P."/>
            <person name="Bielke C."/>
            <person name="Frishman D."/>
            <person name="Haase D."/>
            <person name="Lemcke K."/>
            <person name="Mewes H.-W."/>
            <person name="Stocker S."/>
            <person name="Zaccaria P."/>
            <person name="Bevan M."/>
            <person name="Wilson R.K."/>
            <person name="de la Bastide M."/>
            <person name="Habermann K."/>
            <person name="Parnell L."/>
            <person name="Dedhia N."/>
            <person name="Gnoj L."/>
            <person name="Schutz K."/>
            <person name="Huang E."/>
            <person name="Spiegel L."/>
            <person name="Sekhon M."/>
            <person name="Murray J."/>
            <person name="Sheet P."/>
            <person name="Cordes M."/>
            <person name="Abu-Threideh J."/>
            <person name="Stoneking T."/>
            <person name="Kalicki J."/>
            <person name="Graves T."/>
            <person name="Harmon G."/>
            <person name="Edwards J."/>
            <person name="Latreille P."/>
            <person name="Courtney L."/>
            <person name="Cloud J."/>
            <person name="Abbott A."/>
            <person name="Scott K."/>
            <person name="Johnson D."/>
            <person name="Minx P."/>
            <person name="Bentley D."/>
            <person name="Fulton B."/>
            <person name="Miller N."/>
            <person name="Greco T."/>
            <person name="Kemp K."/>
            <person name="Kramer J."/>
            <person name="Fulton L."/>
            <person name="Mardis E."/>
            <person name="Dante M."/>
            <person name="Pepin K."/>
            <person name="Hillier L.W."/>
            <person name="Nelson J."/>
            <person name="Spieth J."/>
            <person name="Ryan E."/>
            <person name="Andrews S."/>
            <person name="Geisel C."/>
            <person name="Layman D."/>
            <person name="Du H."/>
            <person name="Ali J."/>
            <person name="Berghoff A."/>
            <person name="Jones K."/>
            <person name="Drone K."/>
            <person name="Cotton M."/>
            <person name="Joshu C."/>
            <person name="Antonoiu B."/>
            <person name="Zidanic M."/>
            <person name="Strong C."/>
            <person name="Sun H."/>
            <person name="Lamar B."/>
            <person name="Yordan C."/>
            <person name="Ma P."/>
            <person name="Zhong J."/>
            <person name="Preston R."/>
            <person name="Vil D."/>
            <person name="Shekher M."/>
            <person name="Matero A."/>
            <person name="Shah R."/>
            <person name="Swaby I.K."/>
            <person name="O'Shaughnessy A."/>
            <person name="Rodriguez M."/>
            <person name="Hoffman J."/>
            <person name="Till S."/>
            <person name="Granat S."/>
            <person name="Shohdy N."/>
            <person name="Hasegawa A."/>
            <person name="Hameed A."/>
            <person name="Lodhi M."/>
            <person name="Johnson A."/>
            <person name="Chen E."/>
            <person name="Marra M.A."/>
            <person name="Martienssen R."/>
            <person name="McCombie W.R."/>
        </authorList>
    </citation>
    <scope>NUCLEOTIDE SEQUENCE [LARGE SCALE GENOMIC DNA]</scope>
    <source>
        <strain>cv. Columbia</strain>
    </source>
</reference>
<reference key="3">
    <citation type="journal article" date="2017" name="Plant J.">
        <title>Araport11: a complete reannotation of the Arabidopsis thaliana reference genome.</title>
        <authorList>
            <person name="Cheng C.Y."/>
            <person name="Krishnakumar V."/>
            <person name="Chan A.P."/>
            <person name="Thibaud-Nissen F."/>
            <person name="Schobel S."/>
            <person name="Town C.D."/>
        </authorList>
    </citation>
    <scope>GENOME REANNOTATION</scope>
    <source>
        <strain>cv. Columbia</strain>
    </source>
</reference>
<reference key="4">
    <citation type="submission" date="2006-07" db="EMBL/GenBank/DDBJ databases">
        <title>Large-scale analysis of RIKEN Arabidopsis full-length (RAFL) cDNAs.</title>
        <authorList>
            <person name="Totoki Y."/>
            <person name="Seki M."/>
            <person name="Ishida J."/>
            <person name="Nakajima M."/>
            <person name="Enju A."/>
            <person name="Kamiya A."/>
            <person name="Narusaka M."/>
            <person name="Shin-i T."/>
            <person name="Nakagawa M."/>
            <person name="Sakamoto N."/>
            <person name="Oishi K."/>
            <person name="Kohara Y."/>
            <person name="Kobayashi M."/>
            <person name="Toyoda A."/>
            <person name="Sakaki Y."/>
            <person name="Sakurai T."/>
            <person name="Iida K."/>
            <person name="Akiyama K."/>
            <person name="Satou M."/>
            <person name="Toyoda T."/>
            <person name="Konagaya A."/>
            <person name="Carninci P."/>
            <person name="Kawai J."/>
            <person name="Hayashizaki Y."/>
            <person name="Shinozaki K."/>
        </authorList>
    </citation>
    <scope>NUCLEOTIDE SEQUENCE [LARGE SCALE MRNA] (ISOFORM 2)</scope>
    <source>
        <strain>cv. Columbia</strain>
    </source>
</reference>
<reference key="5">
    <citation type="journal article" date="2007" name="Plant Physiol.">
        <title>Repression of the LEAFY COTYLEDON 1/B3 regulatory network in plant embryo development by VP1/ABSCISIC ACID INSENSITIVE 3-LIKE B3 genes.</title>
        <authorList>
            <person name="Suzuki M."/>
            <person name="Wang H.H.-Y."/>
            <person name="McCarty D.R."/>
        </authorList>
    </citation>
    <scope>FUNCTION</scope>
</reference>
<reference key="6">
    <citation type="journal article" date="2007" name="Proc. Natl. Acad. Sci. U.S.A.">
        <title>Two B3 domain transcriptional repressors prevent sugar-inducible expression of seed maturation genes in Arabidopsis seedlings.</title>
        <authorList>
            <person name="Tsukagoshi H."/>
            <person name="Morikami A."/>
            <person name="Nakamura K."/>
        </authorList>
    </citation>
    <scope>FUNCTION</scope>
</reference>
<reference key="7">
    <citation type="journal article" date="2008" name="Trends Plant Sci.">
        <title>The plant B3 superfamily.</title>
        <authorList>
            <person name="Swaminathan K."/>
            <person name="Peterson K."/>
            <person name="Jack T."/>
        </authorList>
    </citation>
    <scope>GENE FAMILY</scope>
</reference>